<name>Y641_NEOSM</name>
<comment type="subcellular location">
    <subcellularLocation>
        <location evidence="1">Cytoplasm</location>
    </subcellularLocation>
</comment>
<comment type="similarity">
    <text evidence="1">Belongs to the TACO1 family.</text>
</comment>
<dbReference type="EMBL" id="CP000237">
    <property type="protein sequence ID" value="ABD46045.1"/>
    <property type="molecule type" value="Genomic_DNA"/>
</dbReference>
<dbReference type="RefSeq" id="WP_011452025.1">
    <property type="nucleotide sequence ID" value="NC_007798.1"/>
</dbReference>
<dbReference type="SMR" id="Q2GDC7"/>
<dbReference type="STRING" id="222891.NSE_0641"/>
<dbReference type="KEGG" id="nse:NSE_0641"/>
<dbReference type="eggNOG" id="COG0217">
    <property type="taxonomic scope" value="Bacteria"/>
</dbReference>
<dbReference type="HOGENOM" id="CLU_062974_2_2_5"/>
<dbReference type="OrthoDB" id="9781053at2"/>
<dbReference type="Proteomes" id="UP000001942">
    <property type="component" value="Chromosome"/>
</dbReference>
<dbReference type="GO" id="GO:0005737">
    <property type="term" value="C:cytoplasm"/>
    <property type="evidence" value="ECO:0007669"/>
    <property type="project" value="UniProtKB-SubCell"/>
</dbReference>
<dbReference type="GO" id="GO:0003677">
    <property type="term" value="F:DNA binding"/>
    <property type="evidence" value="ECO:0007669"/>
    <property type="project" value="UniProtKB-UniRule"/>
</dbReference>
<dbReference type="GO" id="GO:0006355">
    <property type="term" value="P:regulation of DNA-templated transcription"/>
    <property type="evidence" value="ECO:0007669"/>
    <property type="project" value="UniProtKB-UniRule"/>
</dbReference>
<dbReference type="FunFam" id="1.10.10.200:FF:000002">
    <property type="entry name" value="Probable transcriptional regulatory protein CLM62_37755"/>
    <property type="match status" value="1"/>
</dbReference>
<dbReference type="Gene3D" id="1.10.10.200">
    <property type="match status" value="1"/>
</dbReference>
<dbReference type="Gene3D" id="3.30.70.980">
    <property type="match status" value="2"/>
</dbReference>
<dbReference type="HAMAP" id="MF_00693">
    <property type="entry name" value="Transcrip_reg_TACO1"/>
    <property type="match status" value="1"/>
</dbReference>
<dbReference type="InterPro" id="IPR017856">
    <property type="entry name" value="Integrase-like_N"/>
</dbReference>
<dbReference type="InterPro" id="IPR048300">
    <property type="entry name" value="TACO1_YebC-like_2nd/3rd_dom"/>
</dbReference>
<dbReference type="InterPro" id="IPR049083">
    <property type="entry name" value="TACO1_YebC_N"/>
</dbReference>
<dbReference type="InterPro" id="IPR002876">
    <property type="entry name" value="Transcrip_reg_TACO1-like"/>
</dbReference>
<dbReference type="InterPro" id="IPR026564">
    <property type="entry name" value="Transcrip_reg_TACO1-like_dom3"/>
</dbReference>
<dbReference type="InterPro" id="IPR029072">
    <property type="entry name" value="YebC-like"/>
</dbReference>
<dbReference type="NCBIfam" id="NF001030">
    <property type="entry name" value="PRK00110.1"/>
    <property type="match status" value="1"/>
</dbReference>
<dbReference type="NCBIfam" id="TIGR01033">
    <property type="entry name" value="YebC/PmpR family DNA-binding transcriptional regulator"/>
    <property type="match status" value="1"/>
</dbReference>
<dbReference type="PANTHER" id="PTHR12532">
    <property type="entry name" value="TRANSLATIONAL ACTIVATOR OF CYTOCHROME C OXIDASE 1"/>
    <property type="match status" value="1"/>
</dbReference>
<dbReference type="PANTHER" id="PTHR12532:SF0">
    <property type="entry name" value="TRANSLATIONAL ACTIVATOR OF CYTOCHROME C OXIDASE 1"/>
    <property type="match status" value="1"/>
</dbReference>
<dbReference type="Pfam" id="PF20772">
    <property type="entry name" value="TACO1_YebC_N"/>
    <property type="match status" value="1"/>
</dbReference>
<dbReference type="Pfam" id="PF01709">
    <property type="entry name" value="Transcrip_reg"/>
    <property type="match status" value="1"/>
</dbReference>
<dbReference type="SUPFAM" id="SSF75625">
    <property type="entry name" value="YebC-like"/>
    <property type="match status" value="1"/>
</dbReference>
<gene>
    <name type="ordered locus">NSE_0641</name>
</gene>
<feature type="chain" id="PRO_0000257087" description="Probable transcriptional regulatory protein NSE_0641">
    <location>
        <begin position="1"/>
        <end position="245"/>
    </location>
</feature>
<feature type="region of interest" description="Disordered" evidence="2">
    <location>
        <begin position="1"/>
        <end position="22"/>
    </location>
</feature>
<keyword id="KW-0963">Cytoplasm</keyword>
<keyword id="KW-0238">DNA-binding</keyword>
<keyword id="KW-0804">Transcription</keyword>
<keyword id="KW-0805">Transcription regulation</keyword>
<proteinExistence type="inferred from homology"/>
<reference key="1">
    <citation type="journal article" date="2006" name="PLoS Genet.">
        <title>Comparative genomics of emerging human ehrlichiosis agents.</title>
        <authorList>
            <person name="Dunning Hotopp J.C."/>
            <person name="Lin M."/>
            <person name="Madupu R."/>
            <person name="Crabtree J."/>
            <person name="Angiuoli S.V."/>
            <person name="Eisen J.A."/>
            <person name="Seshadri R."/>
            <person name="Ren Q."/>
            <person name="Wu M."/>
            <person name="Utterback T.R."/>
            <person name="Smith S."/>
            <person name="Lewis M."/>
            <person name="Khouri H."/>
            <person name="Zhang C."/>
            <person name="Niu H."/>
            <person name="Lin Q."/>
            <person name="Ohashi N."/>
            <person name="Zhi N."/>
            <person name="Nelson W.C."/>
            <person name="Brinkac L.M."/>
            <person name="Dodson R.J."/>
            <person name="Rosovitz M.J."/>
            <person name="Sundaram J.P."/>
            <person name="Daugherty S.C."/>
            <person name="Davidsen T."/>
            <person name="Durkin A.S."/>
            <person name="Gwinn M.L."/>
            <person name="Haft D.H."/>
            <person name="Selengut J.D."/>
            <person name="Sullivan S.A."/>
            <person name="Zafar N."/>
            <person name="Zhou L."/>
            <person name="Benahmed F."/>
            <person name="Forberger H."/>
            <person name="Halpin R."/>
            <person name="Mulligan S."/>
            <person name="Robinson J."/>
            <person name="White O."/>
            <person name="Rikihisa Y."/>
            <person name="Tettelin H."/>
        </authorList>
    </citation>
    <scope>NUCLEOTIDE SEQUENCE [LARGE SCALE GENOMIC DNA]</scope>
    <source>
        <strain>ATCC VR-367 / Miyayama</strain>
    </source>
</reference>
<sequence>MAGHSQYANIKHRKNAQDAKRARKFTKLRREILVAARSGLPDPEFNPRLRSALANARRFGLPKDKIESAIKSSTDKTEGDYQEVCYMAASSGGMWPSGFAVVVTALTDNKNRTASNVKHILSKSGLVLADVSFMFESFGVFSYPKSTDFDKLMEVALEASALDIKTEKNHFDVYCSRESFAATSLELRKKLGEYEHSGLVWRAKTHQEVPPEVHVRLEKLVDALEEDDDVQRVYTSILTERQSEK</sequence>
<accession>Q2GDC7</accession>
<protein>
    <recommendedName>
        <fullName evidence="1">Probable transcriptional regulatory protein NSE_0641</fullName>
    </recommendedName>
</protein>
<organism>
    <name type="scientific">Neorickettsia sennetsu (strain ATCC VR-367 / Miyayama)</name>
    <name type="common">Ehrlichia sennetsu</name>
    <dbReference type="NCBI Taxonomy" id="222891"/>
    <lineage>
        <taxon>Bacteria</taxon>
        <taxon>Pseudomonadati</taxon>
        <taxon>Pseudomonadota</taxon>
        <taxon>Alphaproteobacteria</taxon>
        <taxon>Rickettsiales</taxon>
        <taxon>Anaplasmataceae</taxon>
        <taxon>Neorickettsia</taxon>
    </lineage>
</organism>
<evidence type="ECO:0000255" key="1">
    <source>
        <dbReference type="HAMAP-Rule" id="MF_00693"/>
    </source>
</evidence>
<evidence type="ECO:0000256" key="2">
    <source>
        <dbReference type="SAM" id="MobiDB-lite"/>
    </source>
</evidence>